<comment type="function">
    <text evidence="1">Located at the top of the head of the 30S subunit, it contacts several helices of the 16S rRNA. In the 70S ribosome it contacts the 23S rRNA (bridge B1a) and protein L5 of the 50S subunit (bridge B1b), connecting the 2 subunits; these bridges are implicated in subunit movement. Contacts the tRNAs in the A and P-sites.</text>
</comment>
<comment type="subunit">
    <text evidence="1">Part of the 30S ribosomal subunit. Forms a loose heterodimer with protein S19. Forms two bridges to the 50S subunit in the 70S ribosome.</text>
</comment>
<comment type="similarity">
    <text evidence="1">Belongs to the universal ribosomal protein uS13 family.</text>
</comment>
<dbReference type="EMBL" id="AM398681">
    <property type="protein sequence ID" value="CAL43399.1"/>
    <property type="molecule type" value="Genomic_DNA"/>
</dbReference>
<dbReference type="RefSeq" id="WP_011963448.1">
    <property type="nucleotide sequence ID" value="NC_009613.3"/>
</dbReference>
<dbReference type="RefSeq" id="YP_001296210.1">
    <property type="nucleotide sequence ID" value="NC_009613.3"/>
</dbReference>
<dbReference type="SMR" id="A6GZ76"/>
<dbReference type="STRING" id="402612.FP1316"/>
<dbReference type="EnsemblBacteria" id="CAL43399">
    <property type="protein sequence ID" value="CAL43399"/>
    <property type="gene ID" value="FP1316"/>
</dbReference>
<dbReference type="GeneID" id="66553219"/>
<dbReference type="KEGG" id="fps:FP1316"/>
<dbReference type="PATRIC" id="fig|402612.5.peg.1333"/>
<dbReference type="eggNOG" id="COG0099">
    <property type="taxonomic scope" value="Bacteria"/>
</dbReference>
<dbReference type="HOGENOM" id="CLU_103849_1_2_10"/>
<dbReference type="OrthoDB" id="9803610at2"/>
<dbReference type="Proteomes" id="UP000006394">
    <property type="component" value="Chromosome"/>
</dbReference>
<dbReference type="GO" id="GO:0005829">
    <property type="term" value="C:cytosol"/>
    <property type="evidence" value="ECO:0007669"/>
    <property type="project" value="TreeGrafter"/>
</dbReference>
<dbReference type="GO" id="GO:0015935">
    <property type="term" value="C:small ribosomal subunit"/>
    <property type="evidence" value="ECO:0007669"/>
    <property type="project" value="TreeGrafter"/>
</dbReference>
<dbReference type="GO" id="GO:0019843">
    <property type="term" value="F:rRNA binding"/>
    <property type="evidence" value="ECO:0007669"/>
    <property type="project" value="UniProtKB-UniRule"/>
</dbReference>
<dbReference type="GO" id="GO:0003735">
    <property type="term" value="F:structural constituent of ribosome"/>
    <property type="evidence" value="ECO:0007669"/>
    <property type="project" value="InterPro"/>
</dbReference>
<dbReference type="GO" id="GO:0000049">
    <property type="term" value="F:tRNA binding"/>
    <property type="evidence" value="ECO:0007669"/>
    <property type="project" value="UniProtKB-UniRule"/>
</dbReference>
<dbReference type="GO" id="GO:0006412">
    <property type="term" value="P:translation"/>
    <property type="evidence" value="ECO:0007669"/>
    <property type="project" value="UniProtKB-UniRule"/>
</dbReference>
<dbReference type="FunFam" id="1.10.8.50:FF:000001">
    <property type="entry name" value="30S ribosomal protein S13"/>
    <property type="match status" value="1"/>
</dbReference>
<dbReference type="FunFam" id="4.10.910.10:FF:000001">
    <property type="entry name" value="30S ribosomal protein S13"/>
    <property type="match status" value="1"/>
</dbReference>
<dbReference type="Gene3D" id="1.10.8.50">
    <property type="match status" value="1"/>
</dbReference>
<dbReference type="Gene3D" id="4.10.910.10">
    <property type="entry name" value="30s ribosomal protein s13, domain 2"/>
    <property type="match status" value="1"/>
</dbReference>
<dbReference type="HAMAP" id="MF_01315">
    <property type="entry name" value="Ribosomal_uS13"/>
    <property type="match status" value="1"/>
</dbReference>
<dbReference type="InterPro" id="IPR027437">
    <property type="entry name" value="Rbsml_uS13_C"/>
</dbReference>
<dbReference type="InterPro" id="IPR001892">
    <property type="entry name" value="Ribosomal_uS13"/>
</dbReference>
<dbReference type="InterPro" id="IPR010979">
    <property type="entry name" value="Ribosomal_uS13-like_H2TH"/>
</dbReference>
<dbReference type="InterPro" id="IPR019980">
    <property type="entry name" value="Ribosomal_uS13_bac-type"/>
</dbReference>
<dbReference type="InterPro" id="IPR018269">
    <property type="entry name" value="Ribosomal_uS13_CS"/>
</dbReference>
<dbReference type="NCBIfam" id="TIGR03631">
    <property type="entry name" value="uS13_bact"/>
    <property type="match status" value="1"/>
</dbReference>
<dbReference type="PANTHER" id="PTHR10871">
    <property type="entry name" value="30S RIBOSOMAL PROTEIN S13/40S RIBOSOMAL PROTEIN S18"/>
    <property type="match status" value="1"/>
</dbReference>
<dbReference type="PANTHER" id="PTHR10871:SF1">
    <property type="entry name" value="SMALL RIBOSOMAL SUBUNIT PROTEIN US13M"/>
    <property type="match status" value="1"/>
</dbReference>
<dbReference type="Pfam" id="PF00416">
    <property type="entry name" value="Ribosomal_S13"/>
    <property type="match status" value="1"/>
</dbReference>
<dbReference type="PIRSF" id="PIRSF002134">
    <property type="entry name" value="Ribosomal_S13"/>
    <property type="match status" value="1"/>
</dbReference>
<dbReference type="SUPFAM" id="SSF46946">
    <property type="entry name" value="S13-like H2TH domain"/>
    <property type="match status" value="1"/>
</dbReference>
<dbReference type="PROSITE" id="PS00646">
    <property type="entry name" value="RIBOSOMAL_S13_1"/>
    <property type="match status" value="1"/>
</dbReference>
<dbReference type="PROSITE" id="PS50159">
    <property type="entry name" value="RIBOSOMAL_S13_2"/>
    <property type="match status" value="1"/>
</dbReference>
<feature type="chain" id="PRO_0000306603" description="Small ribosomal subunit protein uS13">
    <location>
        <begin position="1"/>
        <end position="124"/>
    </location>
</feature>
<feature type="region of interest" description="Disordered" evidence="2">
    <location>
        <begin position="94"/>
        <end position="124"/>
    </location>
</feature>
<feature type="compositionally biased region" description="Basic residues" evidence="2">
    <location>
        <begin position="100"/>
        <end position="124"/>
    </location>
</feature>
<organism>
    <name type="scientific">Flavobacterium psychrophilum (strain ATCC 49511 / DSM 21280 / CIP 103535 / JIP02/86)</name>
    <dbReference type="NCBI Taxonomy" id="402612"/>
    <lineage>
        <taxon>Bacteria</taxon>
        <taxon>Pseudomonadati</taxon>
        <taxon>Bacteroidota</taxon>
        <taxon>Flavobacteriia</taxon>
        <taxon>Flavobacteriales</taxon>
        <taxon>Flavobacteriaceae</taxon>
        <taxon>Flavobacterium</taxon>
    </lineage>
</organism>
<accession>A6GZ76</accession>
<gene>
    <name evidence="1" type="primary">rpsM</name>
    <name type="ordered locus">FP1316</name>
</gene>
<evidence type="ECO:0000255" key="1">
    <source>
        <dbReference type="HAMAP-Rule" id="MF_01315"/>
    </source>
</evidence>
<evidence type="ECO:0000256" key="2">
    <source>
        <dbReference type="SAM" id="MobiDB-lite"/>
    </source>
</evidence>
<evidence type="ECO:0000305" key="3"/>
<keyword id="KW-1185">Reference proteome</keyword>
<keyword id="KW-0687">Ribonucleoprotein</keyword>
<keyword id="KW-0689">Ribosomal protein</keyword>
<keyword id="KW-0694">RNA-binding</keyword>
<keyword id="KW-0699">rRNA-binding</keyword>
<keyword id="KW-0820">tRNA-binding</keyword>
<name>RS13_FLAPJ</name>
<proteinExistence type="inferred from homology"/>
<reference key="1">
    <citation type="journal article" date="2007" name="Nat. Biotechnol.">
        <title>Complete genome sequence of the fish pathogen Flavobacterium psychrophilum.</title>
        <authorList>
            <person name="Duchaud E."/>
            <person name="Boussaha M."/>
            <person name="Loux V."/>
            <person name="Bernardet J.-F."/>
            <person name="Michel C."/>
            <person name="Kerouault B."/>
            <person name="Mondot S."/>
            <person name="Nicolas P."/>
            <person name="Bossy R."/>
            <person name="Caron C."/>
            <person name="Bessieres P."/>
            <person name="Gibrat J.-F."/>
            <person name="Claverol S."/>
            <person name="Dumetz F."/>
            <person name="Le Henaff M."/>
            <person name="Benmansour A."/>
        </authorList>
    </citation>
    <scope>NUCLEOTIDE SEQUENCE [LARGE SCALE GENOMIC DNA]</scope>
    <source>
        <strain>ATCC 49511 / DSM 21280 / CIP 103535 / JIP02/86</strain>
    </source>
</reference>
<sequence>MARIAGVDIPKNKRGVIALTYIFGVGRSRAIEVLEKAQVSQDKKVQDWNDDEIGGIREAVSFYKIEGELRSEVSLNIKRLMDIGCYRGIRHRSGLPLRGQRTKNNSRTRKGKRKTVANKKKATK</sequence>
<protein>
    <recommendedName>
        <fullName evidence="1">Small ribosomal subunit protein uS13</fullName>
    </recommendedName>
    <alternativeName>
        <fullName evidence="3">30S ribosomal protein S13</fullName>
    </alternativeName>
</protein>